<sequence>MLVSYKWLKELVDIDVTPAALAEKMSTTGIEVEGIEVPAEGLSKLVVGHVLSCEDVPETHLHLCQVDTGDETPRQIVCGAPNVKAGIKVIVAVPGARIADNYKIKKGKIRGMESLGMICSLQELGLSDSIIPKEFSDGIQILPEEAVPGDAIFKYLDLDDHIIELSITPNRADALSMRGVAHEVAAIYGKSVSFPQKNLQESDKATSEAIEVAIASDKVLTYASRVVENVKVKPSPQWLQNLLMNAGIRPINNVVDVTNYVLLYFGQPMHAFDYDKFEDHKIVARAARQGESLVTLDGEKRDLTTEDLVITVADKPVALAGVMGGQATEIDGNSQTVVLEAAVFDGKSIRKTSGRLNLRSESSSRFEKGVNYATVLEALDFAAAMLQELAEGQVLSGHVQAGQLPTEPVEVSTSLDYVNVRLGTELTFADIQRIFDQLGFGLTGDETRFTVAVPRRRWDISIPADLVEEIARIYGYDKLPTTLPEAGGTAAELTPTQALRRKVRGLAEGLGLTEIISYALTTPEKAIEFAVAPSHLTELMWPMSVERSALRQNMVSGMLDTVAYNVARKQSNLALYEIGKIFEQEVNPKEDLPNEVNHFAFAICGLVAQKDFQTQAQAVDFYHAKGILDTLFANLNLKVQYVPTKDLANMHPGRTALILLDEQVIGFVGQVHPGTAKAYSIPETYVAELDMAALEAALPSDQTFAEITKFPAMTRDIALLLDREVSHQAIVTAIESAGVKRLTSIKLFDVYEGATIQAGKKSMAYSLTFQNPNDNLTDEEVAKYMEKITKSLTEQVGAEVR</sequence>
<evidence type="ECO:0000255" key="1">
    <source>
        <dbReference type="HAMAP-Rule" id="MF_00283"/>
    </source>
</evidence>
<comment type="catalytic activity">
    <reaction evidence="1">
        <text>tRNA(Phe) + L-phenylalanine + ATP = L-phenylalanyl-tRNA(Phe) + AMP + diphosphate + H(+)</text>
        <dbReference type="Rhea" id="RHEA:19413"/>
        <dbReference type="Rhea" id="RHEA-COMP:9668"/>
        <dbReference type="Rhea" id="RHEA-COMP:9699"/>
        <dbReference type="ChEBI" id="CHEBI:15378"/>
        <dbReference type="ChEBI" id="CHEBI:30616"/>
        <dbReference type="ChEBI" id="CHEBI:33019"/>
        <dbReference type="ChEBI" id="CHEBI:58095"/>
        <dbReference type="ChEBI" id="CHEBI:78442"/>
        <dbReference type="ChEBI" id="CHEBI:78531"/>
        <dbReference type="ChEBI" id="CHEBI:456215"/>
        <dbReference type="EC" id="6.1.1.20"/>
    </reaction>
</comment>
<comment type="cofactor">
    <cofactor evidence="1">
        <name>Mg(2+)</name>
        <dbReference type="ChEBI" id="CHEBI:18420"/>
    </cofactor>
    <text evidence="1">Binds 2 magnesium ions per tetramer.</text>
</comment>
<comment type="subunit">
    <text evidence="1">Tetramer of two alpha and two beta subunits.</text>
</comment>
<comment type="subcellular location">
    <subcellularLocation>
        <location>Cytoplasm</location>
    </subcellularLocation>
</comment>
<comment type="similarity">
    <text evidence="1">Belongs to the phenylalanyl-tRNA synthetase beta subunit family. Type 1 subfamily.</text>
</comment>
<feature type="chain" id="PRO_0000126967" description="Phenylalanine--tRNA ligase beta subunit">
    <location>
        <begin position="1"/>
        <end position="801"/>
    </location>
</feature>
<feature type="domain" description="tRNA-binding" evidence="1">
    <location>
        <begin position="39"/>
        <end position="153"/>
    </location>
</feature>
<feature type="domain" description="B5" evidence="1">
    <location>
        <begin position="406"/>
        <end position="481"/>
    </location>
</feature>
<feature type="domain" description="FDX-ACB" evidence="1">
    <location>
        <begin position="708"/>
        <end position="801"/>
    </location>
</feature>
<feature type="binding site" evidence="1">
    <location>
        <position position="459"/>
    </location>
    <ligand>
        <name>Mg(2+)</name>
        <dbReference type="ChEBI" id="CHEBI:18420"/>
        <note>shared with alpha subunit</note>
    </ligand>
</feature>
<feature type="binding site" evidence="1">
    <location>
        <position position="465"/>
    </location>
    <ligand>
        <name>Mg(2+)</name>
        <dbReference type="ChEBI" id="CHEBI:18420"/>
        <note>shared with alpha subunit</note>
    </ligand>
</feature>
<feature type="binding site" evidence="1">
    <location>
        <position position="468"/>
    </location>
    <ligand>
        <name>Mg(2+)</name>
        <dbReference type="ChEBI" id="CHEBI:18420"/>
        <note>shared with alpha subunit</note>
    </ligand>
</feature>
<feature type="binding site" evidence="1">
    <location>
        <position position="469"/>
    </location>
    <ligand>
        <name>Mg(2+)</name>
        <dbReference type="ChEBI" id="CHEBI:18420"/>
        <note>shared with alpha subunit</note>
    </ligand>
</feature>
<reference key="1">
    <citation type="journal article" date="2002" name="Proc. Natl. Acad. Sci. U.S.A.">
        <title>Genome sequence and comparative microarray analysis of serotype M18 group A Streptococcus strains associated with acute rheumatic fever outbreaks.</title>
        <authorList>
            <person name="Smoot J.C."/>
            <person name="Barbian K.D."/>
            <person name="Van Gompel J.J."/>
            <person name="Smoot L.M."/>
            <person name="Chaussee M.S."/>
            <person name="Sylva G.L."/>
            <person name="Sturdevant D.E."/>
            <person name="Ricklefs S.M."/>
            <person name="Porcella S.F."/>
            <person name="Parkins L.D."/>
            <person name="Beres S.B."/>
            <person name="Campbell D.S."/>
            <person name="Smith T.M."/>
            <person name="Zhang Q."/>
            <person name="Kapur V."/>
            <person name="Daly J.A."/>
            <person name="Veasy L.G."/>
            <person name="Musser J.M."/>
        </authorList>
    </citation>
    <scope>NUCLEOTIDE SEQUENCE [LARGE SCALE GENOMIC DNA]</scope>
    <source>
        <strain>MGAS8232</strain>
    </source>
</reference>
<dbReference type="EC" id="6.1.1.20" evidence="1"/>
<dbReference type="EMBL" id="AE009949">
    <property type="protein sequence ID" value="AAL97488.1"/>
    <property type="molecule type" value="Genomic_DNA"/>
</dbReference>
<dbReference type="RefSeq" id="WP_011017615.1">
    <property type="nucleotide sequence ID" value="NC_003485.1"/>
</dbReference>
<dbReference type="SMR" id="Q8P1K0"/>
<dbReference type="KEGG" id="spm:spyM18_0828"/>
<dbReference type="HOGENOM" id="CLU_016891_0_0_9"/>
<dbReference type="GO" id="GO:0009328">
    <property type="term" value="C:phenylalanine-tRNA ligase complex"/>
    <property type="evidence" value="ECO:0007669"/>
    <property type="project" value="TreeGrafter"/>
</dbReference>
<dbReference type="GO" id="GO:0005524">
    <property type="term" value="F:ATP binding"/>
    <property type="evidence" value="ECO:0007669"/>
    <property type="project" value="UniProtKB-UniRule"/>
</dbReference>
<dbReference type="GO" id="GO:0140096">
    <property type="term" value="F:catalytic activity, acting on a protein"/>
    <property type="evidence" value="ECO:0007669"/>
    <property type="project" value="UniProtKB-ARBA"/>
</dbReference>
<dbReference type="GO" id="GO:0000287">
    <property type="term" value="F:magnesium ion binding"/>
    <property type="evidence" value="ECO:0007669"/>
    <property type="project" value="UniProtKB-UniRule"/>
</dbReference>
<dbReference type="GO" id="GO:0004826">
    <property type="term" value="F:phenylalanine-tRNA ligase activity"/>
    <property type="evidence" value="ECO:0007669"/>
    <property type="project" value="UniProtKB-UniRule"/>
</dbReference>
<dbReference type="GO" id="GO:0016740">
    <property type="term" value="F:transferase activity"/>
    <property type="evidence" value="ECO:0007669"/>
    <property type="project" value="UniProtKB-ARBA"/>
</dbReference>
<dbReference type="GO" id="GO:0000049">
    <property type="term" value="F:tRNA binding"/>
    <property type="evidence" value="ECO:0007669"/>
    <property type="project" value="UniProtKB-KW"/>
</dbReference>
<dbReference type="GO" id="GO:0006432">
    <property type="term" value="P:phenylalanyl-tRNA aminoacylation"/>
    <property type="evidence" value="ECO:0007669"/>
    <property type="project" value="UniProtKB-UniRule"/>
</dbReference>
<dbReference type="CDD" id="cd00769">
    <property type="entry name" value="PheRS_beta_core"/>
    <property type="match status" value="1"/>
</dbReference>
<dbReference type="CDD" id="cd02796">
    <property type="entry name" value="tRNA_bind_bactPheRS"/>
    <property type="match status" value="1"/>
</dbReference>
<dbReference type="FunFam" id="2.40.50.140:FF:000045">
    <property type="entry name" value="Phenylalanine--tRNA ligase beta subunit"/>
    <property type="match status" value="1"/>
</dbReference>
<dbReference type="FunFam" id="3.30.56.10:FF:000002">
    <property type="entry name" value="Phenylalanine--tRNA ligase beta subunit"/>
    <property type="match status" value="1"/>
</dbReference>
<dbReference type="FunFam" id="3.30.70.380:FF:000001">
    <property type="entry name" value="Phenylalanine--tRNA ligase beta subunit"/>
    <property type="match status" value="1"/>
</dbReference>
<dbReference type="FunFam" id="3.30.930.10:FF:000022">
    <property type="entry name" value="Phenylalanine--tRNA ligase beta subunit"/>
    <property type="match status" value="1"/>
</dbReference>
<dbReference type="FunFam" id="3.50.40.10:FF:000001">
    <property type="entry name" value="Phenylalanine--tRNA ligase beta subunit"/>
    <property type="match status" value="1"/>
</dbReference>
<dbReference type="Gene3D" id="3.30.56.10">
    <property type="match status" value="2"/>
</dbReference>
<dbReference type="Gene3D" id="3.30.930.10">
    <property type="entry name" value="Bira Bifunctional Protein, Domain 2"/>
    <property type="match status" value="1"/>
</dbReference>
<dbReference type="Gene3D" id="3.30.70.380">
    <property type="entry name" value="Ferrodoxin-fold anticodon-binding domain"/>
    <property type="match status" value="1"/>
</dbReference>
<dbReference type="Gene3D" id="2.40.50.140">
    <property type="entry name" value="Nucleic acid-binding proteins"/>
    <property type="match status" value="1"/>
</dbReference>
<dbReference type="Gene3D" id="3.50.40.10">
    <property type="entry name" value="Phenylalanyl-trna Synthetase, Chain B, domain 3"/>
    <property type="match status" value="1"/>
</dbReference>
<dbReference type="HAMAP" id="MF_00283">
    <property type="entry name" value="Phe_tRNA_synth_beta1"/>
    <property type="match status" value="1"/>
</dbReference>
<dbReference type="InterPro" id="IPR045864">
    <property type="entry name" value="aa-tRNA-synth_II/BPL/LPL"/>
</dbReference>
<dbReference type="InterPro" id="IPR005146">
    <property type="entry name" value="B3/B4_tRNA-bd"/>
</dbReference>
<dbReference type="InterPro" id="IPR009061">
    <property type="entry name" value="DNA-bd_dom_put_sf"/>
</dbReference>
<dbReference type="InterPro" id="IPR005121">
    <property type="entry name" value="Fdx_antiC-bd"/>
</dbReference>
<dbReference type="InterPro" id="IPR036690">
    <property type="entry name" value="Fdx_antiC-bd_sf"/>
</dbReference>
<dbReference type="InterPro" id="IPR012340">
    <property type="entry name" value="NA-bd_OB-fold"/>
</dbReference>
<dbReference type="InterPro" id="IPR045060">
    <property type="entry name" value="Phe-tRNA-ligase_IIc_bsu"/>
</dbReference>
<dbReference type="InterPro" id="IPR004532">
    <property type="entry name" value="Phe-tRNA-ligase_IIc_bsu_bact"/>
</dbReference>
<dbReference type="InterPro" id="IPR020825">
    <property type="entry name" value="Phe-tRNA_synthase-like_B3/B4"/>
</dbReference>
<dbReference type="InterPro" id="IPR041616">
    <property type="entry name" value="PheRS_beta_core"/>
</dbReference>
<dbReference type="InterPro" id="IPR002547">
    <property type="entry name" value="tRNA-bd_dom"/>
</dbReference>
<dbReference type="InterPro" id="IPR033714">
    <property type="entry name" value="tRNA_bind_bactPheRS"/>
</dbReference>
<dbReference type="InterPro" id="IPR005147">
    <property type="entry name" value="tRNA_synthase_B5-dom"/>
</dbReference>
<dbReference type="NCBIfam" id="TIGR00472">
    <property type="entry name" value="pheT_bact"/>
    <property type="match status" value="1"/>
</dbReference>
<dbReference type="NCBIfam" id="NF045760">
    <property type="entry name" value="YtpR"/>
    <property type="match status" value="1"/>
</dbReference>
<dbReference type="PANTHER" id="PTHR10947:SF0">
    <property type="entry name" value="PHENYLALANINE--TRNA LIGASE BETA SUBUNIT"/>
    <property type="match status" value="1"/>
</dbReference>
<dbReference type="PANTHER" id="PTHR10947">
    <property type="entry name" value="PHENYLALANYL-TRNA SYNTHETASE BETA CHAIN AND LEUCINE-RICH REPEAT-CONTAINING PROTEIN 47"/>
    <property type="match status" value="1"/>
</dbReference>
<dbReference type="Pfam" id="PF03483">
    <property type="entry name" value="B3_4"/>
    <property type="match status" value="1"/>
</dbReference>
<dbReference type="Pfam" id="PF03484">
    <property type="entry name" value="B5"/>
    <property type="match status" value="1"/>
</dbReference>
<dbReference type="Pfam" id="PF03147">
    <property type="entry name" value="FDX-ACB"/>
    <property type="match status" value="1"/>
</dbReference>
<dbReference type="Pfam" id="PF01588">
    <property type="entry name" value="tRNA_bind"/>
    <property type="match status" value="1"/>
</dbReference>
<dbReference type="Pfam" id="PF17759">
    <property type="entry name" value="tRNA_synthFbeta"/>
    <property type="match status" value="1"/>
</dbReference>
<dbReference type="SMART" id="SM00873">
    <property type="entry name" value="B3_4"/>
    <property type="match status" value="1"/>
</dbReference>
<dbReference type="SMART" id="SM00874">
    <property type="entry name" value="B5"/>
    <property type="match status" value="1"/>
</dbReference>
<dbReference type="SMART" id="SM00896">
    <property type="entry name" value="FDX-ACB"/>
    <property type="match status" value="1"/>
</dbReference>
<dbReference type="SUPFAM" id="SSF54991">
    <property type="entry name" value="Anticodon-binding domain of PheRS"/>
    <property type="match status" value="1"/>
</dbReference>
<dbReference type="SUPFAM" id="SSF55681">
    <property type="entry name" value="Class II aaRS and biotin synthetases"/>
    <property type="match status" value="1"/>
</dbReference>
<dbReference type="SUPFAM" id="SSF50249">
    <property type="entry name" value="Nucleic acid-binding proteins"/>
    <property type="match status" value="1"/>
</dbReference>
<dbReference type="SUPFAM" id="SSF56037">
    <property type="entry name" value="PheT/TilS domain"/>
    <property type="match status" value="1"/>
</dbReference>
<dbReference type="SUPFAM" id="SSF46955">
    <property type="entry name" value="Putative DNA-binding domain"/>
    <property type="match status" value="1"/>
</dbReference>
<dbReference type="PROSITE" id="PS51483">
    <property type="entry name" value="B5"/>
    <property type="match status" value="1"/>
</dbReference>
<dbReference type="PROSITE" id="PS51447">
    <property type="entry name" value="FDX_ACB"/>
    <property type="match status" value="1"/>
</dbReference>
<dbReference type="PROSITE" id="PS50886">
    <property type="entry name" value="TRBD"/>
    <property type="match status" value="1"/>
</dbReference>
<accession>Q8P1K0</accession>
<protein>
    <recommendedName>
        <fullName evidence="1">Phenylalanine--tRNA ligase beta subunit</fullName>
        <ecNumber evidence="1">6.1.1.20</ecNumber>
    </recommendedName>
    <alternativeName>
        <fullName evidence="1">Phenylalanyl-tRNA synthetase beta subunit</fullName>
        <shortName evidence="1">PheRS</shortName>
    </alternativeName>
</protein>
<organism>
    <name type="scientific">Streptococcus pyogenes serotype M18 (strain MGAS8232)</name>
    <dbReference type="NCBI Taxonomy" id="186103"/>
    <lineage>
        <taxon>Bacteria</taxon>
        <taxon>Bacillati</taxon>
        <taxon>Bacillota</taxon>
        <taxon>Bacilli</taxon>
        <taxon>Lactobacillales</taxon>
        <taxon>Streptococcaceae</taxon>
        <taxon>Streptococcus</taxon>
    </lineage>
</organism>
<name>SYFB_STRP8</name>
<gene>
    <name evidence="1" type="primary">pheT</name>
    <name type="ordered locus">spyM18_0828</name>
</gene>
<proteinExistence type="inferred from homology"/>
<keyword id="KW-0030">Aminoacyl-tRNA synthetase</keyword>
<keyword id="KW-0067">ATP-binding</keyword>
<keyword id="KW-0963">Cytoplasm</keyword>
<keyword id="KW-0436">Ligase</keyword>
<keyword id="KW-0460">Magnesium</keyword>
<keyword id="KW-0479">Metal-binding</keyword>
<keyword id="KW-0547">Nucleotide-binding</keyword>
<keyword id="KW-0648">Protein biosynthesis</keyword>
<keyword id="KW-0694">RNA-binding</keyword>
<keyword id="KW-0820">tRNA-binding</keyword>